<protein>
    <recommendedName>
        <fullName>Rab effector Noc2</fullName>
    </recommendedName>
    <alternativeName>
        <fullName>No C2 domains protein</fullName>
    </alternativeName>
    <alternativeName>
        <fullName>Rabphilin-3A-like protein</fullName>
    </alternativeName>
</protein>
<feature type="chain" id="PRO_0000278265" description="Rab effector Noc2">
    <location>
        <begin position="1"/>
        <end position="302"/>
    </location>
</feature>
<feature type="domain" description="RabBD" evidence="4">
    <location>
        <begin position="41"/>
        <end position="158"/>
    </location>
</feature>
<feature type="zinc finger region" description="FYVE-type" evidence="3">
    <location>
        <begin position="89"/>
        <end position="146"/>
    </location>
</feature>
<feature type="region of interest" description="Disordered" evidence="5">
    <location>
        <begin position="174"/>
        <end position="194"/>
    </location>
</feature>
<feature type="region of interest" description="Disordered" evidence="5">
    <location>
        <begin position="206"/>
        <end position="302"/>
    </location>
</feature>
<feature type="compositionally biased region" description="Low complexity" evidence="5">
    <location>
        <begin position="258"/>
        <end position="269"/>
    </location>
</feature>
<feature type="binding site" evidence="3">
    <location>
        <position position="95"/>
    </location>
    <ligand>
        <name>Zn(2+)</name>
        <dbReference type="ChEBI" id="CHEBI:29105"/>
        <label>1</label>
    </ligand>
</feature>
<feature type="binding site" evidence="3">
    <location>
        <position position="98"/>
    </location>
    <ligand>
        <name>Zn(2+)</name>
        <dbReference type="ChEBI" id="CHEBI:29105"/>
        <label>1</label>
    </ligand>
</feature>
<feature type="binding site" evidence="3">
    <location>
        <position position="112"/>
    </location>
    <ligand>
        <name>Zn(2+)</name>
        <dbReference type="ChEBI" id="CHEBI:29105"/>
        <label>2</label>
    </ligand>
</feature>
<feature type="binding site" evidence="3">
    <location>
        <position position="115"/>
    </location>
    <ligand>
        <name>Zn(2+)</name>
        <dbReference type="ChEBI" id="CHEBI:29105"/>
        <label>2</label>
    </ligand>
</feature>
<feature type="binding site" evidence="3">
    <location>
        <position position="120"/>
    </location>
    <ligand>
        <name>Zn(2+)</name>
        <dbReference type="ChEBI" id="CHEBI:29105"/>
        <label>1</label>
    </ligand>
</feature>
<feature type="binding site" evidence="3">
    <location>
        <position position="123"/>
    </location>
    <ligand>
        <name>Zn(2+)</name>
        <dbReference type="ChEBI" id="CHEBI:29105"/>
        <label>1</label>
    </ligand>
</feature>
<feature type="binding site" evidence="3">
    <location>
        <position position="138"/>
    </location>
    <ligand>
        <name>Zn(2+)</name>
        <dbReference type="ChEBI" id="CHEBI:29105"/>
        <label>2</label>
    </ligand>
</feature>
<feature type="binding site" evidence="3">
    <location>
        <position position="141"/>
    </location>
    <ligand>
        <name>Zn(2+)</name>
        <dbReference type="ChEBI" id="CHEBI:29105"/>
        <label>2</label>
    </ligand>
</feature>
<feature type="modified residue" description="Phosphoserine" evidence="2">
    <location>
        <position position="248"/>
    </location>
</feature>
<dbReference type="EMBL" id="AF022774">
    <property type="protein sequence ID" value="AAB95448.1"/>
    <property type="molecule type" value="mRNA"/>
</dbReference>
<dbReference type="EMBL" id="BC091126">
    <property type="protein sequence ID" value="AAH91126.1"/>
    <property type="molecule type" value="mRNA"/>
</dbReference>
<dbReference type="RefSeq" id="NP_598275.1">
    <property type="nucleotide sequence ID" value="NM_133591.2"/>
</dbReference>
<dbReference type="RefSeq" id="XP_008766163.1">
    <property type="nucleotide sequence ID" value="XM_008767941.4"/>
</dbReference>
<dbReference type="RefSeq" id="XP_008766164.1">
    <property type="nucleotide sequence ID" value="XM_008767942.4"/>
</dbReference>
<dbReference type="SMR" id="O54880"/>
<dbReference type="BioGRID" id="251130">
    <property type="interactions" value="1"/>
</dbReference>
<dbReference type="FunCoup" id="O54880">
    <property type="interactions" value="64"/>
</dbReference>
<dbReference type="STRING" id="10116.ENSRNOP00000075521"/>
<dbReference type="GlyGen" id="O54880">
    <property type="glycosylation" value="1 site"/>
</dbReference>
<dbReference type="PhosphoSitePlus" id="O54880"/>
<dbReference type="PaxDb" id="10116-ENSRNOP00000008697"/>
<dbReference type="Ensembl" id="ENSRNOT00000081725.2">
    <property type="protein sequence ID" value="ENSRNOP00000075521.1"/>
    <property type="gene ID" value="ENSRNOG00000061429.2"/>
</dbReference>
<dbReference type="GeneID" id="171123"/>
<dbReference type="KEGG" id="rno:171123"/>
<dbReference type="AGR" id="RGD:620342"/>
<dbReference type="CTD" id="9501"/>
<dbReference type="RGD" id="620342">
    <property type="gene designation" value="Rph3al"/>
</dbReference>
<dbReference type="eggNOG" id="KOG1013">
    <property type="taxonomic scope" value="Eukaryota"/>
</dbReference>
<dbReference type="GeneTree" id="ENSGT00440000034248"/>
<dbReference type="HOGENOM" id="CLU_076502_1_0_1"/>
<dbReference type="InParanoid" id="O54880"/>
<dbReference type="OMA" id="AGKRHTW"/>
<dbReference type="OrthoDB" id="270970at2759"/>
<dbReference type="PhylomeDB" id="O54880"/>
<dbReference type="TreeFam" id="TF342971"/>
<dbReference type="PRO" id="PR:O54880"/>
<dbReference type="Proteomes" id="UP000002494">
    <property type="component" value="Chromosome 10"/>
</dbReference>
<dbReference type="Bgee" id="ENSRNOG00000061429">
    <property type="expression patterns" value="Expressed in ovary and 20 other cell types or tissues"/>
</dbReference>
<dbReference type="GO" id="GO:0098793">
    <property type="term" value="C:presynapse"/>
    <property type="evidence" value="ECO:0007669"/>
    <property type="project" value="GOC"/>
</dbReference>
<dbReference type="GO" id="GO:0030141">
    <property type="term" value="C:secretory granule"/>
    <property type="evidence" value="ECO:0000314"/>
    <property type="project" value="RGD"/>
</dbReference>
<dbReference type="GO" id="GO:0045202">
    <property type="term" value="C:synapse"/>
    <property type="evidence" value="ECO:0000318"/>
    <property type="project" value="GO_Central"/>
</dbReference>
<dbReference type="GO" id="GO:0030658">
    <property type="term" value="C:transport vesicle membrane"/>
    <property type="evidence" value="ECO:0007669"/>
    <property type="project" value="UniProtKB-SubCell"/>
</dbReference>
<dbReference type="GO" id="GO:0030274">
    <property type="term" value="F:LIM domain binding"/>
    <property type="evidence" value="ECO:0000353"/>
    <property type="project" value="RGD"/>
</dbReference>
<dbReference type="GO" id="GO:0031267">
    <property type="term" value="F:small GTPase binding"/>
    <property type="evidence" value="ECO:0007669"/>
    <property type="project" value="InterPro"/>
</dbReference>
<dbReference type="GO" id="GO:0008270">
    <property type="term" value="F:zinc ion binding"/>
    <property type="evidence" value="ECO:0007669"/>
    <property type="project" value="UniProtKB-KW"/>
</dbReference>
<dbReference type="GO" id="GO:0099502">
    <property type="term" value="P:calcium-dependent activation of synaptic vesicle fusion"/>
    <property type="evidence" value="ECO:0000318"/>
    <property type="project" value="GO_Central"/>
</dbReference>
<dbReference type="GO" id="GO:0007186">
    <property type="term" value="P:G protein-coupled receptor signaling pathway"/>
    <property type="evidence" value="ECO:0000266"/>
    <property type="project" value="RGD"/>
</dbReference>
<dbReference type="GO" id="GO:0042593">
    <property type="term" value="P:glucose homeostasis"/>
    <property type="evidence" value="ECO:0000266"/>
    <property type="project" value="RGD"/>
</dbReference>
<dbReference type="GO" id="GO:0006886">
    <property type="term" value="P:intracellular protein transport"/>
    <property type="evidence" value="ECO:0007669"/>
    <property type="project" value="InterPro"/>
</dbReference>
<dbReference type="GO" id="GO:0045744">
    <property type="term" value="P:negative regulation of G protein-coupled receptor signaling pathway"/>
    <property type="evidence" value="ECO:0000266"/>
    <property type="project" value="RGD"/>
</dbReference>
<dbReference type="GO" id="GO:0045956">
    <property type="term" value="P:positive regulation of calcium ion-dependent exocytosis"/>
    <property type="evidence" value="ECO:0000318"/>
    <property type="project" value="GO_Central"/>
</dbReference>
<dbReference type="GO" id="GO:0032024">
    <property type="term" value="P:positive regulation of insulin secretion"/>
    <property type="evidence" value="ECO:0000266"/>
    <property type="project" value="RGD"/>
</dbReference>
<dbReference type="GO" id="GO:0050714">
    <property type="term" value="P:positive regulation of protein secretion"/>
    <property type="evidence" value="ECO:0000315"/>
    <property type="project" value="RGD"/>
</dbReference>
<dbReference type="GO" id="GO:0017158">
    <property type="term" value="P:regulation of calcium ion-dependent exocytosis"/>
    <property type="evidence" value="ECO:0000266"/>
    <property type="project" value="RGD"/>
</dbReference>
<dbReference type="GO" id="GO:0009410">
    <property type="term" value="P:response to xenobiotic stimulus"/>
    <property type="evidence" value="ECO:0000270"/>
    <property type="project" value="RGD"/>
</dbReference>
<dbReference type="CDD" id="cd15763">
    <property type="entry name" value="FYVE_RPH3L"/>
    <property type="match status" value="1"/>
</dbReference>
<dbReference type="FunFam" id="3.30.40.10:FF:000347">
    <property type="entry name" value="rab effector Noc2 isoform X1"/>
    <property type="match status" value="1"/>
</dbReference>
<dbReference type="Gene3D" id="3.30.40.10">
    <property type="entry name" value="Zinc/RING finger domain, C3HC4 (zinc finger)"/>
    <property type="match status" value="1"/>
</dbReference>
<dbReference type="InterPro" id="IPR041282">
    <property type="entry name" value="FYVE_2"/>
</dbReference>
<dbReference type="InterPro" id="IPR041857">
    <property type="entry name" value="Noc2_FYVE"/>
</dbReference>
<dbReference type="InterPro" id="IPR010911">
    <property type="entry name" value="Rab_BD"/>
</dbReference>
<dbReference type="InterPro" id="IPR043566">
    <property type="entry name" value="Rabphilin/DOC2/Noc2"/>
</dbReference>
<dbReference type="InterPro" id="IPR017455">
    <property type="entry name" value="Znf_FYVE-rel"/>
</dbReference>
<dbReference type="InterPro" id="IPR011011">
    <property type="entry name" value="Znf_FYVE_PHD"/>
</dbReference>
<dbReference type="InterPro" id="IPR013083">
    <property type="entry name" value="Znf_RING/FYVE/PHD"/>
</dbReference>
<dbReference type="PANTHER" id="PTHR45729:SF4">
    <property type="entry name" value="RAB EFFECTOR NOC2"/>
    <property type="match status" value="1"/>
</dbReference>
<dbReference type="PANTHER" id="PTHR45729">
    <property type="entry name" value="RABPHILIN, ISOFORM A"/>
    <property type="match status" value="1"/>
</dbReference>
<dbReference type="Pfam" id="PF02318">
    <property type="entry name" value="FYVE_2"/>
    <property type="match status" value="1"/>
</dbReference>
<dbReference type="SUPFAM" id="SSF57903">
    <property type="entry name" value="FYVE/PHD zinc finger"/>
    <property type="match status" value="1"/>
</dbReference>
<dbReference type="PROSITE" id="PS50916">
    <property type="entry name" value="RABBD"/>
    <property type="match status" value="1"/>
</dbReference>
<dbReference type="PROSITE" id="PS50178">
    <property type="entry name" value="ZF_FYVE"/>
    <property type="match status" value="1"/>
</dbReference>
<gene>
    <name type="primary">Rph3al</name>
    <name type="synonym">Noc2</name>
</gene>
<evidence type="ECO:0000250" key="1"/>
<evidence type="ECO:0000250" key="2">
    <source>
        <dbReference type="UniProtKB" id="Q768S4"/>
    </source>
</evidence>
<evidence type="ECO:0000255" key="3">
    <source>
        <dbReference type="PROSITE-ProRule" id="PRU00091"/>
    </source>
</evidence>
<evidence type="ECO:0000255" key="4">
    <source>
        <dbReference type="PROSITE-ProRule" id="PRU00234"/>
    </source>
</evidence>
<evidence type="ECO:0000256" key="5">
    <source>
        <dbReference type="SAM" id="MobiDB-lite"/>
    </source>
</evidence>
<evidence type="ECO:0000269" key="6">
    <source>
    </source>
</evidence>
<evidence type="ECO:0000269" key="7">
    <source>
    </source>
</evidence>
<evidence type="ECO:0000269" key="8">
    <source>
    </source>
</evidence>
<keyword id="KW-0963">Cytoplasm</keyword>
<keyword id="KW-0968">Cytoplasmic vesicle</keyword>
<keyword id="KW-0268">Exocytosis</keyword>
<keyword id="KW-0472">Membrane</keyword>
<keyword id="KW-0479">Metal-binding</keyword>
<keyword id="KW-0597">Phosphoprotein</keyword>
<keyword id="KW-1185">Reference proteome</keyword>
<keyword id="KW-0862">Zinc</keyword>
<keyword id="KW-0863">Zinc-finger</keyword>
<sequence>MADTIFSSGNDQWVCPNDRQLALRAKLQTGWSVHTYQTEKQRRTQCLSPGEVEVILQVIQRAERLDILEQQRIGRLVERLETMQKNVMGNGVSQCLLCGEMLGFLGSSSVFCKDCRKKVCTKCGIEASPGQKRPLWLCKICSEQREVWKRSGAWFYKGLPKYILPLKTPGRADDPHFRPLPVEPTEPQPQSAEVSRVYTWARGRVVSSDSDSDSDLSSSSLEDRPMPSGIKGTKYDKPRGDSGGSMESPRMGPARPPSHLSGSQSSLGSETGAGATDPQGGTLPRPEPRVSGKRHTWATTHY</sequence>
<comment type="function">
    <text evidence="6 7 8">Rab GTPase effector involved in the late steps of regulated exocytosis, both in endocrine and exocrine cells. Regulates the exocytosis of dense-core vesicles in neuroendocrine cells through interaction with RAB27A. Acts as a potential RAB3B effector protein in epithelial cells.</text>
</comment>
<comment type="subunit">
    <text evidence="6 7 8">Recruited to dense-core vesicles through specific interaction with RAB27A in endocrine cells. Interacts with RAB3A, RAB3B, RAB3C and RAB3D. Interacts with ZYX.</text>
</comment>
<comment type="subcellular location">
    <subcellularLocation>
        <location>Cytoplasm</location>
    </subcellularLocation>
    <subcellularLocation>
        <location>Cytoplasmic vesicle</location>
        <location>Secretory vesicle membrane</location>
    </subcellularLocation>
    <text>Recruited to the exocytic secretory vesicles by RAB27A.</text>
</comment>
<comment type="tissue specificity">
    <text evidence="8">Highly expressed in pancreatic islets and parotid. High to moderate expression in adrenal gland, pituitary gland and ovary.</text>
</comment>
<comment type="domain">
    <text evidence="1">The N-terminus of the RabBD domain is necessary and sufficient for interaction with RAB27A.</text>
</comment>
<proteinExistence type="evidence at protein level"/>
<name>RPH3L_RAT</name>
<organism>
    <name type="scientific">Rattus norvegicus</name>
    <name type="common">Rat</name>
    <dbReference type="NCBI Taxonomy" id="10116"/>
    <lineage>
        <taxon>Eukaryota</taxon>
        <taxon>Metazoa</taxon>
        <taxon>Chordata</taxon>
        <taxon>Craniata</taxon>
        <taxon>Vertebrata</taxon>
        <taxon>Euteleostomi</taxon>
        <taxon>Mammalia</taxon>
        <taxon>Eutheria</taxon>
        <taxon>Euarchontoglires</taxon>
        <taxon>Glires</taxon>
        <taxon>Rodentia</taxon>
        <taxon>Myomorpha</taxon>
        <taxon>Muroidea</taxon>
        <taxon>Muridae</taxon>
        <taxon>Murinae</taxon>
        <taxon>Rattus</taxon>
    </lineage>
</organism>
<accession>O54880</accession>
<reference key="1">
    <citation type="journal article" date="1997" name="J. Biol. Chem.">
        <title>Noc2, a putative zinc finger protein involved in exocytosis in endocrine cells.</title>
        <authorList>
            <person name="Kotake K."/>
            <person name="Ozaki N."/>
            <person name="Mizuta M."/>
            <person name="Sekiya S."/>
            <person name="Inagaki N."/>
            <person name="Seino S."/>
        </authorList>
    </citation>
    <scope>NUCLEOTIDE SEQUENCE [MRNA]</scope>
    <scope>FUNCTION</scope>
    <scope>SUBUNIT</scope>
    <scope>SUBCELLULAR LOCATION</scope>
    <scope>TISSUE SPECIFICITY</scope>
    <scope>INTERACTION WITH ZYX</scope>
    <source>
        <tissue>Insulinoma</tissue>
    </source>
</reference>
<reference key="2">
    <citation type="journal article" date="2004" name="Genome Res.">
        <title>The status, quality, and expansion of the NIH full-length cDNA project: the Mammalian Gene Collection (MGC).</title>
        <authorList>
            <consortium name="The MGC Project Team"/>
        </authorList>
    </citation>
    <scope>NUCLEOTIDE SEQUENCE [LARGE SCALE MRNA]</scope>
</reference>
<reference key="3">
    <citation type="journal article" date="2001" name="J. Biol. Chem.">
        <title>A direct inhibitory role for the Rab3-specific effector, Noc2, in Ca2+-regulated exocytosis in neuroendocrine cells.</title>
        <authorList>
            <person name="Haynes L.P."/>
            <person name="Evans G.J."/>
            <person name="Morgan A."/>
            <person name="Burgoyne R.D."/>
        </authorList>
    </citation>
    <scope>FUNCTION</scope>
    <scope>INTERACTION WITH RAB3A</scope>
</reference>
<reference key="4">
    <citation type="journal article" date="2006" name="Arch. Biochem. Biophys.">
        <title>Functional involvement of Noc2, a Rab27 effector, in rat parotid acinar cells.</title>
        <authorList>
            <person name="Imai A."/>
            <person name="Yoshie S."/>
            <person name="Nashida T."/>
            <person name="Shimomura H."/>
            <person name="Fukuda M."/>
        </authorList>
    </citation>
    <scope>FUNCTION</scope>
    <scope>SUBCELLULAR LOCATION</scope>
    <scope>INTERACTION WITH RAB27A</scope>
</reference>